<organism>
    <name type="scientific">Bacillus cereus (strain ATCC 10987 / NRS 248)</name>
    <dbReference type="NCBI Taxonomy" id="222523"/>
    <lineage>
        <taxon>Bacteria</taxon>
        <taxon>Bacillati</taxon>
        <taxon>Bacillota</taxon>
        <taxon>Bacilli</taxon>
        <taxon>Bacillales</taxon>
        <taxon>Bacillaceae</taxon>
        <taxon>Bacillus</taxon>
        <taxon>Bacillus cereus group</taxon>
    </lineage>
</organism>
<comment type="function">
    <text evidence="1">Reversibly transfers an adenylyl group from ATP to 4'-phosphopantetheine, yielding dephospho-CoA (dPCoA) and pyrophosphate.</text>
</comment>
<comment type="catalytic activity">
    <reaction evidence="1">
        <text>(R)-4'-phosphopantetheine + ATP + H(+) = 3'-dephospho-CoA + diphosphate</text>
        <dbReference type="Rhea" id="RHEA:19801"/>
        <dbReference type="ChEBI" id="CHEBI:15378"/>
        <dbReference type="ChEBI" id="CHEBI:30616"/>
        <dbReference type="ChEBI" id="CHEBI:33019"/>
        <dbReference type="ChEBI" id="CHEBI:57328"/>
        <dbReference type="ChEBI" id="CHEBI:61723"/>
        <dbReference type="EC" id="2.7.7.3"/>
    </reaction>
</comment>
<comment type="cofactor">
    <cofactor evidence="1">
        <name>Mg(2+)</name>
        <dbReference type="ChEBI" id="CHEBI:18420"/>
    </cofactor>
</comment>
<comment type="pathway">
    <text evidence="1">Cofactor biosynthesis; coenzyme A biosynthesis; CoA from (R)-pantothenate: step 4/5.</text>
</comment>
<comment type="subunit">
    <text evidence="1">Homohexamer.</text>
</comment>
<comment type="subcellular location">
    <subcellularLocation>
        <location evidence="1">Cytoplasm</location>
    </subcellularLocation>
</comment>
<comment type="similarity">
    <text evidence="1">Belongs to the bacterial CoaD family.</text>
</comment>
<protein>
    <recommendedName>
        <fullName evidence="1">Phosphopantetheine adenylyltransferase</fullName>
        <ecNumber evidence="1">2.7.7.3</ecNumber>
    </recommendedName>
    <alternativeName>
        <fullName evidence="1">Dephospho-CoA pyrophosphorylase</fullName>
    </alternativeName>
    <alternativeName>
        <fullName evidence="1">Pantetheine-phosphate adenylyltransferase</fullName>
        <shortName evidence="1">PPAT</shortName>
    </alternativeName>
</protein>
<dbReference type="EC" id="2.7.7.3" evidence="1"/>
<dbReference type="EMBL" id="AE017194">
    <property type="protein sequence ID" value="AAS42879.1"/>
    <property type="molecule type" value="Genomic_DNA"/>
</dbReference>
<dbReference type="SMR" id="Q732D8"/>
<dbReference type="KEGG" id="bca:BCE_3976"/>
<dbReference type="HOGENOM" id="CLU_100149_0_1_9"/>
<dbReference type="UniPathway" id="UPA00241">
    <property type="reaction ID" value="UER00355"/>
</dbReference>
<dbReference type="Proteomes" id="UP000002527">
    <property type="component" value="Chromosome"/>
</dbReference>
<dbReference type="GO" id="GO:0005737">
    <property type="term" value="C:cytoplasm"/>
    <property type="evidence" value="ECO:0007669"/>
    <property type="project" value="UniProtKB-SubCell"/>
</dbReference>
<dbReference type="GO" id="GO:0005524">
    <property type="term" value="F:ATP binding"/>
    <property type="evidence" value="ECO:0007669"/>
    <property type="project" value="UniProtKB-KW"/>
</dbReference>
<dbReference type="GO" id="GO:0004595">
    <property type="term" value="F:pantetheine-phosphate adenylyltransferase activity"/>
    <property type="evidence" value="ECO:0007669"/>
    <property type="project" value="UniProtKB-UniRule"/>
</dbReference>
<dbReference type="GO" id="GO:0015937">
    <property type="term" value="P:coenzyme A biosynthetic process"/>
    <property type="evidence" value="ECO:0007669"/>
    <property type="project" value="UniProtKB-UniRule"/>
</dbReference>
<dbReference type="CDD" id="cd02163">
    <property type="entry name" value="PPAT"/>
    <property type="match status" value="1"/>
</dbReference>
<dbReference type="FunFam" id="3.40.50.620:FF:000012">
    <property type="entry name" value="Phosphopantetheine adenylyltransferase"/>
    <property type="match status" value="1"/>
</dbReference>
<dbReference type="Gene3D" id="3.40.50.620">
    <property type="entry name" value="HUPs"/>
    <property type="match status" value="1"/>
</dbReference>
<dbReference type="HAMAP" id="MF_00151">
    <property type="entry name" value="PPAT_bact"/>
    <property type="match status" value="1"/>
</dbReference>
<dbReference type="InterPro" id="IPR004821">
    <property type="entry name" value="Cyt_trans-like"/>
</dbReference>
<dbReference type="InterPro" id="IPR001980">
    <property type="entry name" value="PPAT"/>
</dbReference>
<dbReference type="InterPro" id="IPR014729">
    <property type="entry name" value="Rossmann-like_a/b/a_fold"/>
</dbReference>
<dbReference type="NCBIfam" id="TIGR01510">
    <property type="entry name" value="coaD_prev_kdtB"/>
    <property type="match status" value="1"/>
</dbReference>
<dbReference type="NCBIfam" id="TIGR00125">
    <property type="entry name" value="cyt_tran_rel"/>
    <property type="match status" value="1"/>
</dbReference>
<dbReference type="PANTHER" id="PTHR21342">
    <property type="entry name" value="PHOSPHOPANTETHEINE ADENYLYLTRANSFERASE"/>
    <property type="match status" value="1"/>
</dbReference>
<dbReference type="PANTHER" id="PTHR21342:SF1">
    <property type="entry name" value="PHOSPHOPANTETHEINE ADENYLYLTRANSFERASE"/>
    <property type="match status" value="1"/>
</dbReference>
<dbReference type="Pfam" id="PF01467">
    <property type="entry name" value="CTP_transf_like"/>
    <property type="match status" value="1"/>
</dbReference>
<dbReference type="PRINTS" id="PR01020">
    <property type="entry name" value="LPSBIOSNTHSS"/>
</dbReference>
<dbReference type="SUPFAM" id="SSF52374">
    <property type="entry name" value="Nucleotidylyl transferase"/>
    <property type="match status" value="1"/>
</dbReference>
<name>COAD_BACC1</name>
<proteinExistence type="inferred from homology"/>
<reference key="1">
    <citation type="journal article" date="2004" name="Nucleic Acids Res.">
        <title>The genome sequence of Bacillus cereus ATCC 10987 reveals metabolic adaptations and a large plasmid related to Bacillus anthracis pXO1.</title>
        <authorList>
            <person name="Rasko D.A."/>
            <person name="Ravel J."/>
            <person name="Oekstad O.A."/>
            <person name="Helgason E."/>
            <person name="Cer R.Z."/>
            <person name="Jiang L."/>
            <person name="Shores K.A."/>
            <person name="Fouts D.E."/>
            <person name="Tourasse N.J."/>
            <person name="Angiuoli S.V."/>
            <person name="Kolonay J.F."/>
            <person name="Nelson W.C."/>
            <person name="Kolstoe A.-B."/>
            <person name="Fraser C.M."/>
            <person name="Read T.D."/>
        </authorList>
    </citation>
    <scope>NUCLEOTIDE SEQUENCE [LARGE SCALE GENOMIC DNA]</scope>
    <source>
        <strain>ATCC 10987 / NRS 248</strain>
    </source>
</reference>
<gene>
    <name evidence="1" type="primary">coaD</name>
    <name type="ordered locus">BCE_3976</name>
</gene>
<evidence type="ECO:0000255" key="1">
    <source>
        <dbReference type="HAMAP-Rule" id="MF_00151"/>
    </source>
</evidence>
<keyword id="KW-0067">ATP-binding</keyword>
<keyword id="KW-0173">Coenzyme A biosynthesis</keyword>
<keyword id="KW-0963">Cytoplasm</keyword>
<keyword id="KW-0460">Magnesium</keyword>
<keyword id="KW-0547">Nucleotide-binding</keyword>
<keyword id="KW-0548">Nucleotidyltransferase</keyword>
<keyword id="KW-0808">Transferase</keyword>
<sequence length="163" mass="18379">MTSIAISSGSFDPITLGHLDIIKRGAKVFDEVYVVVLNNSSKKPFFSVEERLDLIREATKDIPNVKVDSHSGLLVEYAKMRNANAILRGLRAVSDFEYEMQITSMNRKLDENIETFFIMTNNQYSFLSSSIVKEVARYGGSVVDLVPPVVERALKEKFQTPLK</sequence>
<feature type="chain" id="PRO_0000156162" description="Phosphopantetheine adenylyltransferase">
    <location>
        <begin position="1"/>
        <end position="163"/>
    </location>
</feature>
<feature type="binding site" evidence="1">
    <location>
        <begin position="10"/>
        <end position="11"/>
    </location>
    <ligand>
        <name>ATP</name>
        <dbReference type="ChEBI" id="CHEBI:30616"/>
    </ligand>
</feature>
<feature type="binding site" evidence="1">
    <location>
        <position position="10"/>
    </location>
    <ligand>
        <name>substrate</name>
    </ligand>
</feature>
<feature type="binding site" evidence="1">
    <location>
        <position position="18"/>
    </location>
    <ligand>
        <name>ATP</name>
        <dbReference type="ChEBI" id="CHEBI:30616"/>
    </ligand>
</feature>
<feature type="binding site" evidence="1">
    <location>
        <position position="42"/>
    </location>
    <ligand>
        <name>substrate</name>
    </ligand>
</feature>
<feature type="binding site" evidence="1">
    <location>
        <position position="74"/>
    </location>
    <ligand>
        <name>substrate</name>
    </ligand>
</feature>
<feature type="binding site" evidence="1">
    <location>
        <position position="88"/>
    </location>
    <ligand>
        <name>substrate</name>
    </ligand>
</feature>
<feature type="binding site" evidence="1">
    <location>
        <begin position="89"/>
        <end position="91"/>
    </location>
    <ligand>
        <name>ATP</name>
        <dbReference type="ChEBI" id="CHEBI:30616"/>
    </ligand>
</feature>
<feature type="binding site" evidence="1">
    <location>
        <position position="99"/>
    </location>
    <ligand>
        <name>ATP</name>
        <dbReference type="ChEBI" id="CHEBI:30616"/>
    </ligand>
</feature>
<feature type="binding site" evidence="1">
    <location>
        <begin position="124"/>
        <end position="130"/>
    </location>
    <ligand>
        <name>ATP</name>
        <dbReference type="ChEBI" id="CHEBI:30616"/>
    </ligand>
</feature>
<feature type="site" description="Transition state stabilizer" evidence="1">
    <location>
        <position position="18"/>
    </location>
</feature>
<accession>Q732D8</accession>